<comment type="function">
    <text evidence="1">DNA ligase that catalyzes the formation of phosphodiester linkages between 5'-phosphoryl and 3'-hydroxyl groups in double-stranded DNA using NAD as a coenzyme and as the energy source for the reaction. It is essential for DNA replication and repair of damaged DNA.</text>
</comment>
<comment type="catalytic activity">
    <reaction evidence="1">
        <text>NAD(+) + (deoxyribonucleotide)n-3'-hydroxyl + 5'-phospho-(deoxyribonucleotide)m = (deoxyribonucleotide)n+m + AMP + beta-nicotinamide D-nucleotide.</text>
        <dbReference type="EC" id="6.5.1.2"/>
    </reaction>
</comment>
<comment type="cofactor">
    <cofactor evidence="1">
        <name>Mg(2+)</name>
        <dbReference type="ChEBI" id="CHEBI:18420"/>
    </cofactor>
    <cofactor evidence="1">
        <name>Mn(2+)</name>
        <dbReference type="ChEBI" id="CHEBI:29035"/>
    </cofactor>
</comment>
<comment type="similarity">
    <text evidence="1">Belongs to the NAD-dependent DNA ligase family. LigA subfamily.</text>
</comment>
<keyword id="KW-0227">DNA damage</keyword>
<keyword id="KW-0234">DNA repair</keyword>
<keyword id="KW-0235">DNA replication</keyword>
<keyword id="KW-0436">Ligase</keyword>
<keyword id="KW-0460">Magnesium</keyword>
<keyword id="KW-0464">Manganese</keyword>
<keyword id="KW-0479">Metal-binding</keyword>
<keyword id="KW-0520">NAD</keyword>
<keyword id="KW-1185">Reference proteome</keyword>
<keyword id="KW-0862">Zinc</keyword>
<sequence>MEEDLFSLAAGKQPSQQATNETAPRAGEARENAGTDHPGNAEDPAHRRIDYLRSELRRHNRLYYEQAEPEISDAEYDALFLELEKLEKAHPELSDPDSPTRRVGGAPLQGFNQIRHAVPMLSIDDIFEQRDAPVPDEELAEFYHKLSRALQTENVPVSVEPKIDGVALSIMYRNGKLAYAATRGDGDVGDDVTANVRTIRSVPLTLPPGAPPVLEVRGEVFMPNEAFAKLNEERDADGLPAFANPRNATAGTLKQLDPRQVAARPLAFLAHGLGAYEGPELRDAKDFWNMLRHCGIPCNEPVYYTDSLESTRQAVRDIDRLRHTLPYGTDGAVIKISSTATREALGATARAPRWAAAYKFPPEQKETTLLNIVVQVGRTGVLTPVAELQPVLLSGSTVARATLHNQDEIDRKDVRIGDTVLVEKAGEIIPAVLKVNLSKRPQDARPYSILEATKGLCPACGNPIMKEEGKVAWRCTNFTCPAQAVTGITHFCSRSALDVESIGSSVAEALRSSGLASSALDLFSLMPDQLANLNLGTPEEPRRYGEKNARKALDALQNARGLPLERWLIAFGIPLVGEVVAKALADTHPDLKHVADSPYLRDIVRLDELVEQAAKTNPNTRENKKAVKEGALSAEAVQERHQELMEEIDRLTAPYLATGYLRKNTAKFSYGSEIGVAAAKSLRSFFASAAGNHTMDVLHRLGINPQSQSYRASLLEIPAGSLSGKTFVITGTLSHPRDYFEQLIASHGGKATGAISKSTSCLLAGNGGGSKRDKALKLGVPVISEEDFYKMIGN</sequence>
<feature type="chain" id="PRO_0000380285" description="DNA ligase">
    <location>
        <begin position="1"/>
        <end position="794"/>
    </location>
</feature>
<feature type="domain" description="BRCT" evidence="1">
    <location>
        <begin position="717"/>
        <end position="794"/>
    </location>
</feature>
<feature type="region of interest" description="Disordered" evidence="2">
    <location>
        <begin position="1"/>
        <end position="47"/>
    </location>
</feature>
<feature type="compositionally biased region" description="Polar residues" evidence="2">
    <location>
        <begin position="13"/>
        <end position="22"/>
    </location>
</feature>
<feature type="compositionally biased region" description="Basic and acidic residues" evidence="2">
    <location>
        <begin position="27"/>
        <end position="47"/>
    </location>
</feature>
<feature type="active site" description="N6-AMP-lysine intermediate" evidence="1">
    <location>
        <position position="162"/>
    </location>
</feature>
<feature type="binding site" evidence="1">
    <location>
        <begin position="73"/>
        <end position="77"/>
    </location>
    <ligand>
        <name>NAD(+)</name>
        <dbReference type="ChEBI" id="CHEBI:57540"/>
    </ligand>
</feature>
<feature type="binding site" evidence="1">
    <location>
        <begin position="122"/>
        <end position="123"/>
    </location>
    <ligand>
        <name>NAD(+)</name>
        <dbReference type="ChEBI" id="CHEBI:57540"/>
    </ligand>
</feature>
<feature type="binding site" evidence="1">
    <location>
        <position position="160"/>
    </location>
    <ligand>
        <name>NAD(+)</name>
        <dbReference type="ChEBI" id="CHEBI:57540"/>
    </ligand>
</feature>
<feature type="binding site" evidence="1">
    <location>
        <position position="183"/>
    </location>
    <ligand>
        <name>NAD(+)</name>
        <dbReference type="ChEBI" id="CHEBI:57540"/>
    </ligand>
</feature>
<feature type="binding site" evidence="1">
    <location>
        <position position="219"/>
    </location>
    <ligand>
        <name>NAD(+)</name>
        <dbReference type="ChEBI" id="CHEBI:57540"/>
    </ligand>
</feature>
<feature type="binding site" evidence="1">
    <location>
        <position position="335"/>
    </location>
    <ligand>
        <name>NAD(+)</name>
        <dbReference type="ChEBI" id="CHEBI:57540"/>
    </ligand>
</feature>
<feature type="binding site" evidence="1">
    <location>
        <position position="359"/>
    </location>
    <ligand>
        <name>NAD(+)</name>
        <dbReference type="ChEBI" id="CHEBI:57540"/>
    </ligand>
</feature>
<feature type="binding site" evidence="1">
    <location>
        <position position="457"/>
    </location>
    <ligand>
        <name>Zn(2+)</name>
        <dbReference type="ChEBI" id="CHEBI:29105"/>
    </ligand>
</feature>
<feature type="binding site" evidence="1">
    <location>
        <position position="460"/>
    </location>
    <ligand>
        <name>Zn(2+)</name>
        <dbReference type="ChEBI" id="CHEBI:29105"/>
    </ligand>
</feature>
<feature type="binding site" evidence="1">
    <location>
        <position position="475"/>
    </location>
    <ligand>
        <name>Zn(2+)</name>
        <dbReference type="ChEBI" id="CHEBI:29105"/>
    </ligand>
</feature>
<feature type="binding site" evidence="1">
    <location>
        <position position="480"/>
    </location>
    <ligand>
        <name>Zn(2+)</name>
        <dbReference type="ChEBI" id="CHEBI:29105"/>
    </ligand>
</feature>
<protein>
    <recommendedName>
        <fullName evidence="1">DNA ligase</fullName>
        <ecNumber evidence="1">6.5.1.2</ecNumber>
    </recommendedName>
    <alternativeName>
        <fullName evidence="1">Polydeoxyribonucleotide synthase [NAD(+)]</fullName>
    </alternativeName>
</protein>
<gene>
    <name evidence="1" type="primary">ligA</name>
    <name type="ordered locus">Amuc_0011</name>
</gene>
<name>DNLJ_AKKM8</name>
<proteinExistence type="inferred from homology"/>
<accession>B2UL69</accession>
<evidence type="ECO:0000255" key="1">
    <source>
        <dbReference type="HAMAP-Rule" id="MF_01588"/>
    </source>
</evidence>
<evidence type="ECO:0000256" key="2">
    <source>
        <dbReference type="SAM" id="MobiDB-lite"/>
    </source>
</evidence>
<dbReference type="EC" id="6.5.1.2" evidence="1"/>
<dbReference type="EMBL" id="CP001071">
    <property type="protein sequence ID" value="ACD03858.1"/>
    <property type="molecule type" value="Genomic_DNA"/>
</dbReference>
<dbReference type="RefSeq" id="WP_012419073.1">
    <property type="nucleotide sequence ID" value="NC_010655.1"/>
</dbReference>
<dbReference type="SMR" id="B2UL69"/>
<dbReference type="STRING" id="349741.Amuc_0011"/>
<dbReference type="PaxDb" id="349741-Amuc_0011"/>
<dbReference type="KEGG" id="amu:Amuc_0011"/>
<dbReference type="eggNOG" id="COG0272">
    <property type="taxonomic scope" value="Bacteria"/>
</dbReference>
<dbReference type="HOGENOM" id="CLU_007764_2_1_0"/>
<dbReference type="OrthoDB" id="9759736at2"/>
<dbReference type="BioCyc" id="AMUC349741:G1GBX-13-MONOMER"/>
<dbReference type="Proteomes" id="UP000001031">
    <property type="component" value="Chromosome"/>
</dbReference>
<dbReference type="GO" id="GO:0005829">
    <property type="term" value="C:cytosol"/>
    <property type="evidence" value="ECO:0007669"/>
    <property type="project" value="TreeGrafter"/>
</dbReference>
<dbReference type="GO" id="GO:0003911">
    <property type="term" value="F:DNA ligase (NAD+) activity"/>
    <property type="evidence" value="ECO:0007669"/>
    <property type="project" value="UniProtKB-UniRule"/>
</dbReference>
<dbReference type="GO" id="GO:0046872">
    <property type="term" value="F:metal ion binding"/>
    <property type="evidence" value="ECO:0007669"/>
    <property type="project" value="UniProtKB-KW"/>
</dbReference>
<dbReference type="GO" id="GO:0006281">
    <property type="term" value="P:DNA repair"/>
    <property type="evidence" value="ECO:0007669"/>
    <property type="project" value="UniProtKB-KW"/>
</dbReference>
<dbReference type="GO" id="GO:0006260">
    <property type="term" value="P:DNA replication"/>
    <property type="evidence" value="ECO:0007669"/>
    <property type="project" value="UniProtKB-KW"/>
</dbReference>
<dbReference type="CDD" id="cd17748">
    <property type="entry name" value="BRCT_DNA_ligase_like"/>
    <property type="match status" value="1"/>
</dbReference>
<dbReference type="CDD" id="cd00114">
    <property type="entry name" value="LIGANc"/>
    <property type="match status" value="1"/>
</dbReference>
<dbReference type="FunFam" id="2.40.50.140:FF:000012">
    <property type="entry name" value="DNA ligase"/>
    <property type="match status" value="1"/>
</dbReference>
<dbReference type="Gene3D" id="6.20.10.30">
    <property type="match status" value="1"/>
</dbReference>
<dbReference type="Gene3D" id="1.10.150.20">
    <property type="entry name" value="5' to 3' exonuclease, C-terminal subdomain"/>
    <property type="match status" value="2"/>
</dbReference>
<dbReference type="Gene3D" id="3.40.50.10190">
    <property type="entry name" value="BRCT domain"/>
    <property type="match status" value="1"/>
</dbReference>
<dbReference type="Gene3D" id="3.30.470.30">
    <property type="entry name" value="DNA ligase/mRNA capping enzyme"/>
    <property type="match status" value="1"/>
</dbReference>
<dbReference type="Gene3D" id="1.10.287.610">
    <property type="entry name" value="Helix hairpin bin"/>
    <property type="match status" value="1"/>
</dbReference>
<dbReference type="Gene3D" id="2.40.50.140">
    <property type="entry name" value="Nucleic acid-binding proteins"/>
    <property type="match status" value="1"/>
</dbReference>
<dbReference type="HAMAP" id="MF_01588">
    <property type="entry name" value="DNA_ligase_A"/>
    <property type="match status" value="1"/>
</dbReference>
<dbReference type="InterPro" id="IPR001357">
    <property type="entry name" value="BRCT_dom"/>
</dbReference>
<dbReference type="InterPro" id="IPR036420">
    <property type="entry name" value="BRCT_dom_sf"/>
</dbReference>
<dbReference type="InterPro" id="IPR001679">
    <property type="entry name" value="DNA_ligase"/>
</dbReference>
<dbReference type="InterPro" id="IPR018239">
    <property type="entry name" value="DNA_ligase_AS"/>
</dbReference>
<dbReference type="InterPro" id="IPR033136">
    <property type="entry name" value="DNA_ligase_CS"/>
</dbReference>
<dbReference type="InterPro" id="IPR013839">
    <property type="entry name" value="DNAligase_adenylation"/>
</dbReference>
<dbReference type="InterPro" id="IPR013840">
    <property type="entry name" value="DNAligase_N"/>
</dbReference>
<dbReference type="InterPro" id="IPR012340">
    <property type="entry name" value="NA-bd_OB-fold"/>
</dbReference>
<dbReference type="InterPro" id="IPR004150">
    <property type="entry name" value="NAD_DNA_ligase_OB"/>
</dbReference>
<dbReference type="InterPro" id="IPR010994">
    <property type="entry name" value="RuvA_2-like"/>
</dbReference>
<dbReference type="InterPro" id="IPR004149">
    <property type="entry name" value="Znf_DNAligase_C4"/>
</dbReference>
<dbReference type="NCBIfam" id="TIGR00575">
    <property type="entry name" value="dnlj"/>
    <property type="match status" value="1"/>
</dbReference>
<dbReference type="NCBIfam" id="NF005932">
    <property type="entry name" value="PRK07956.1"/>
    <property type="match status" value="1"/>
</dbReference>
<dbReference type="PANTHER" id="PTHR23389">
    <property type="entry name" value="CHROMOSOME TRANSMISSION FIDELITY FACTOR 18"/>
    <property type="match status" value="1"/>
</dbReference>
<dbReference type="PANTHER" id="PTHR23389:SF9">
    <property type="entry name" value="DNA LIGASE"/>
    <property type="match status" value="1"/>
</dbReference>
<dbReference type="Pfam" id="PF00533">
    <property type="entry name" value="BRCT"/>
    <property type="match status" value="1"/>
</dbReference>
<dbReference type="Pfam" id="PF01653">
    <property type="entry name" value="DNA_ligase_aden"/>
    <property type="match status" value="1"/>
</dbReference>
<dbReference type="Pfam" id="PF03120">
    <property type="entry name" value="DNA_ligase_OB"/>
    <property type="match status" value="1"/>
</dbReference>
<dbReference type="Pfam" id="PF03119">
    <property type="entry name" value="DNA_ligase_ZBD"/>
    <property type="match status" value="1"/>
</dbReference>
<dbReference type="Pfam" id="PF22745">
    <property type="entry name" value="Nlig-Ia"/>
    <property type="match status" value="1"/>
</dbReference>
<dbReference type="PIRSF" id="PIRSF001604">
    <property type="entry name" value="LigA"/>
    <property type="match status" value="1"/>
</dbReference>
<dbReference type="SMART" id="SM00292">
    <property type="entry name" value="BRCT"/>
    <property type="match status" value="1"/>
</dbReference>
<dbReference type="SMART" id="SM00532">
    <property type="entry name" value="LIGANc"/>
    <property type="match status" value="1"/>
</dbReference>
<dbReference type="SUPFAM" id="SSF52113">
    <property type="entry name" value="BRCT domain"/>
    <property type="match status" value="1"/>
</dbReference>
<dbReference type="SUPFAM" id="SSF56091">
    <property type="entry name" value="DNA ligase/mRNA capping enzyme, catalytic domain"/>
    <property type="match status" value="1"/>
</dbReference>
<dbReference type="SUPFAM" id="SSF50249">
    <property type="entry name" value="Nucleic acid-binding proteins"/>
    <property type="match status" value="1"/>
</dbReference>
<dbReference type="SUPFAM" id="SSF47781">
    <property type="entry name" value="RuvA domain 2-like"/>
    <property type="match status" value="1"/>
</dbReference>
<dbReference type="PROSITE" id="PS50172">
    <property type="entry name" value="BRCT"/>
    <property type="match status" value="1"/>
</dbReference>
<dbReference type="PROSITE" id="PS01055">
    <property type="entry name" value="DNA_LIGASE_N1"/>
    <property type="match status" value="1"/>
</dbReference>
<dbReference type="PROSITE" id="PS01056">
    <property type="entry name" value="DNA_LIGASE_N2"/>
    <property type="match status" value="1"/>
</dbReference>
<reference key="1">
    <citation type="journal article" date="2011" name="PLoS ONE">
        <title>The genome of Akkermansia muciniphila, a dedicated intestinal mucin degrader, and its use in exploring intestinal metagenomes.</title>
        <authorList>
            <person name="van Passel M.W."/>
            <person name="Kant R."/>
            <person name="Zoetendal E.G."/>
            <person name="Plugge C.M."/>
            <person name="Derrien M."/>
            <person name="Malfatti S.A."/>
            <person name="Chain P.S."/>
            <person name="Woyke T."/>
            <person name="Palva A."/>
            <person name="de Vos W.M."/>
            <person name="Smidt H."/>
        </authorList>
    </citation>
    <scope>NUCLEOTIDE SEQUENCE [LARGE SCALE GENOMIC DNA]</scope>
    <source>
        <strain>ATCC BAA-835 / DSM 22959 / JCM 33894 / BCRC 81048 / CCUG 64013 / CIP 107961 / Muc</strain>
    </source>
</reference>
<organism>
    <name type="scientific">Akkermansia muciniphila (strain ATCC BAA-835 / DSM 22959 / JCM 33894 / BCRC 81048 / CCUG 64013 / CIP 107961 / Muc)</name>
    <dbReference type="NCBI Taxonomy" id="349741"/>
    <lineage>
        <taxon>Bacteria</taxon>
        <taxon>Pseudomonadati</taxon>
        <taxon>Verrucomicrobiota</taxon>
        <taxon>Verrucomicrobiia</taxon>
        <taxon>Verrucomicrobiales</taxon>
        <taxon>Akkermansiaceae</taxon>
        <taxon>Akkermansia</taxon>
    </lineage>
</organism>